<organism>
    <name type="scientific">Staphylococcus aureus (strain N315)</name>
    <dbReference type="NCBI Taxonomy" id="158879"/>
    <lineage>
        <taxon>Bacteria</taxon>
        <taxon>Bacillati</taxon>
        <taxon>Bacillota</taxon>
        <taxon>Bacilli</taxon>
        <taxon>Bacillales</taxon>
        <taxon>Staphylococcaceae</taxon>
        <taxon>Staphylococcus</taxon>
    </lineage>
</organism>
<evidence type="ECO:0000255" key="1">
    <source>
        <dbReference type="HAMAP-Rule" id="MF_00023"/>
    </source>
</evidence>
<feature type="chain" id="PRO_0000103030" description="SsrA-binding protein">
    <location>
        <begin position="1"/>
        <end position="154"/>
    </location>
</feature>
<name>SSRP_STAAN</name>
<dbReference type="EMBL" id="BA000018">
    <property type="protein sequence ID" value="BAB41969.1"/>
    <property type="molecule type" value="Genomic_DNA"/>
</dbReference>
<dbReference type="PIR" id="F89851">
    <property type="entry name" value="F89851"/>
</dbReference>
<dbReference type="RefSeq" id="WP_001085183.1">
    <property type="nucleotide sequence ID" value="NC_002745.2"/>
</dbReference>
<dbReference type="SMR" id="P66863"/>
<dbReference type="EnsemblBacteria" id="BAB41969">
    <property type="protein sequence ID" value="BAB41969"/>
    <property type="gene ID" value="BAB41969"/>
</dbReference>
<dbReference type="KEGG" id="sau:SA0736"/>
<dbReference type="HOGENOM" id="CLU_108953_0_0_9"/>
<dbReference type="GO" id="GO:0005829">
    <property type="term" value="C:cytosol"/>
    <property type="evidence" value="ECO:0007669"/>
    <property type="project" value="TreeGrafter"/>
</dbReference>
<dbReference type="GO" id="GO:0003723">
    <property type="term" value="F:RNA binding"/>
    <property type="evidence" value="ECO:0007669"/>
    <property type="project" value="UniProtKB-UniRule"/>
</dbReference>
<dbReference type="GO" id="GO:0070929">
    <property type="term" value="P:trans-translation"/>
    <property type="evidence" value="ECO:0007669"/>
    <property type="project" value="UniProtKB-UniRule"/>
</dbReference>
<dbReference type="CDD" id="cd09294">
    <property type="entry name" value="SmpB"/>
    <property type="match status" value="1"/>
</dbReference>
<dbReference type="Gene3D" id="2.40.280.10">
    <property type="match status" value="1"/>
</dbReference>
<dbReference type="HAMAP" id="MF_00023">
    <property type="entry name" value="SmpB"/>
    <property type="match status" value="1"/>
</dbReference>
<dbReference type="InterPro" id="IPR023620">
    <property type="entry name" value="SmpB"/>
</dbReference>
<dbReference type="InterPro" id="IPR000037">
    <property type="entry name" value="SsrA-bd_prot"/>
</dbReference>
<dbReference type="InterPro" id="IPR020081">
    <property type="entry name" value="SsrA-bd_prot_CS"/>
</dbReference>
<dbReference type="NCBIfam" id="NF003843">
    <property type="entry name" value="PRK05422.1"/>
    <property type="match status" value="1"/>
</dbReference>
<dbReference type="NCBIfam" id="TIGR00086">
    <property type="entry name" value="smpB"/>
    <property type="match status" value="1"/>
</dbReference>
<dbReference type="PANTHER" id="PTHR30308:SF2">
    <property type="entry name" value="SSRA-BINDING PROTEIN"/>
    <property type="match status" value="1"/>
</dbReference>
<dbReference type="PANTHER" id="PTHR30308">
    <property type="entry name" value="TMRNA-BINDING COMPONENT OF TRANS-TRANSLATION TAGGING COMPLEX"/>
    <property type="match status" value="1"/>
</dbReference>
<dbReference type="Pfam" id="PF01668">
    <property type="entry name" value="SmpB"/>
    <property type="match status" value="1"/>
</dbReference>
<dbReference type="SUPFAM" id="SSF74982">
    <property type="entry name" value="Small protein B (SmpB)"/>
    <property type="match status" value="1"/>
</dbReference>
<dbReference type="PROSITE" id="PS01317">
    <property type="entry name" value="SSRP"/>
    <property type="match status" value="1"/>
</dbReference>
<comment type="function">
    <text evidence="1">Required for rescue of stalled ribosomes mediated by trans-translation. Binds to transfer-messenger RNA (tmRNA), required for stable association of tmRNA with ribosomes. tmRNA and SmpB together mimic tRNA shape, replacing the anticodon stem-loop with SmpB. tmRNA is encoded by the ssrA gene; the 2 termini fold to resemble tRNA(Ala) and it encodes a 'tag peptide', a short internal open reading frame. During trans-translation Ala-aminoacylated tmRNA acts like a tRNA, entering the A-site of stalled ribosomes, displacing the stalled mRNA. The ribosome then switches to translate the ORF on the tmRNA; the nascent peptide is terminated with the 'tag peptide' encoded by the tmRNA and targeted for degradation. The ribosome is freed to recommence translation, which seems to be the essential function of trans-translation.</text>
</comment>
<comment type="subcellular location">
    <subcellularLocation>
        <location evidence="1">Cytoplasm</location>
    </subcellularLocation>
    <text evidence="1">The tmRNA-SmpB complex associates with stalled 70S ribosomes.</text>
</comment>
<comment type="similarity">
    <text evidence="1">Belongs to the SmpB family.</text>
</comment>
<accession>P66863</accession>
<accession>Q99VK0</accession>
<reference key="1">
    <citation type="journal article" date="2001" name="Lancet">
        <title>Whole genome sequencing of meticillin-resistant Staphylococcus aureus.</title>
        <authorList>
            <person name="Kuroda M."/>
            <person name="Ohta T."/>
            <person name="Uchiyama I."/>
            <person name="Baba T."/>
            <person name="Yuzawa H."/>
            <person name="Kobayashi I."/>
            <person name="Cui L."/>
            <person name="Oguchi A."/>
            <person name="Aoki K."/>
            <person name="Nagai Y."/>
            <person name="Lian J.-Q."/>
            <person name="Ito T."/>
            <person name="Kanamori M."/>
            <person name="Matsumaru H."/>
            <person name="Maruyama A."/>
            <person name="Murakami H."/>
            <person name="Hosoyama A."/>
            <person name="Mizutani-Ui Y."/>
            <person name="Takahashi N.K."/>
            <person name="Sawano T."/>
            <person name="Inoue R."/>
            <person name="Kaito C."/>
            <person name="Sekimizu K."/>
            <person name="Hirakawa H."/>
            <person name="Kuhara S."/>
            <person name="Goto S."/>
            <person name="Yabuzaki J."/>
            <person name="Kanehisa M."/>
            <person name="Yamashita A."/>
            <person name="Oshima K."/>
            <person name="Furuya K."/>
            <person name="Yoshino C."/>
            <person name="Shiba T."/>
            <person name="Hattori M."/>
            <person name="Ogasawara N."/>
            <person name="Hayashi H."/>
            <person name="Hiramatsu K."/>
        </authorList>
    </citation>
    <scope>NUCLEOTIDE SEQUENCE [LARGE SCALE GENOMIC DNA]</scope>
    <source>
        <strain>N315</strain>
    </source>
</reference>
<gene>
    <name evidence="1" type="primary">smpB</name>
    <name type="synonym">ssrP</name>
    <name type="ordered locus">SA0736</name>
</gene>
<proteinExistence type="inferred from homology"/>
<keyword id="KW-0963">Cytoplasm</keyword>
<keyword id="KW-0694">RNA-binding</keyword>
<protein>
    <recommendedName>
        <fullName evidence="1">SsrA-binding protein</fullName>
    </recommendedName>
    <alternativeName>
        <fullName evidence="1">Small protein B</fullName>
    </alternativeName>
</protein>
<sequence>MAKKKSPGTLAENRKARHDYNIEDTIEAGIVLQGTEIKSIRRGSANLKDSYAQVKNGEMYLNNMHIAPYEEGNRFNHDPLRSRKLLLHKREIFKLGEQTREIGYSIVPLKLYLKHGHCKVLLGVARGKKKYDKRQALKEKAVKRDVARDMKARY</sequence>